<comment type="function">
    <text>Part of the insoluble cornified cell envelope (CE) of stratified squamous epithelia.</text>
</comment>
<comment type="subunit">
    <text>Directly or indirectly cross-linked to cornifelin (CNFN).</text>
</comment>
<comment type="subcellular location">
    <subcellularLocation>
        <location>Cytoplasm</location>
    </subcellularLocation>
    <text>Constituent of the scaffolding of the cornified envelope.</text>
</comment>
<comment type="tissue specificity">
    <text>Keratinocytes of epidermis and other stratified squamous epithelia.</text>
</comment>
<comment type="PTM">
    <text>Substrate of transglutaminase. Specific glutamines or lysines are cross-linked to keratins, desmoplakin and to inter involucrin molecules.</text>
</comment>
<comment type="similarity">
    <text evidence="2">Belongs to the involucrin family.</text>
</comment>
<gene>
    <name type="primary">Ivl</name>
</gene>
<organism>
    <name type="scientific">Mus musculus</name>
    <name type="common">Mouse</name>
    <dbReference type="NCBI Taxonomy" id="10090"/>
    <lineage>
        <taxon>Eukaryota</taxon>
        <taxon>Metazoa</taxon>
        <taxon>Chordata</taxon>
        <taxon>Craniata</taxon>
        <taxon>Vertebrata</taxon>
        <taxon>Euteleostomi</taxon>
        <taxon>Mammalia</taxon>
        <taxon>Eutheria</taxon>
        <taxon>Euarchontoglires</taxon>
        <taxon>Glires</taxon>
        <taxon>Rodentia</taxon>
        <taxon>Myomorpha</taxon>
        <taxon>Muroidea</taxon>
        <taxon>Muridae</taxon>
        <taxon>Murinae</taxon>
        <taxon>Mus</taxon>
        <taxon>Mus</taxon>
    </lineage>
</organism>
<reference key="1">
    <citation type="journal article" date="1993" name="Mol. Biol. Evol.">
        <title>The involucrin genes of the mouse and the rat: study of their shared repeats.</title>
        <authorList>
            <person name="Djian P."/>
            <person name="Phillips M."/>
            <person name="Easley K."/>
            <person name="Huang E."/>
            <person name="Simon M."/>
            <person name="Rice R.H."/>
            <person name="Green H."/>
        </authorList>
    </citation>
    <scope>NUCLEOTIDE SEQUENCE [GENOMIC DNA]</scope>
    <source>
        <strain>NIH Swiss</strain>
    </source>
</reference>
<reference key="2">
    <citation type="journal article" date="2004" name="Biochem. Biophys. Res. Commun.">
        <title>Identification and characterization of a novel component of the cornified envelope, cornifelin.</title>
        <authorList>
            <person name="Michibata H."/>
            <person name="Chiba H."/>
            <person name="Wakimoto K."/>
            <person name="Seishima M."/>
            <person name="Kawasaki S."/>
            <person name="Okubo K."/>
            <person name="Mitsui H."/>
            <person name="Torii H."/>
            <person name="Imai Y."/>
        </authorList>
    </citation>
    <scope>INTERACTION WITH INVOLUCRIN</scope>
</reference>
<proteinExistence type="evidence at protein level"/>
<protein>
    <recommendedName>
        <fullName>Involucrin</fullName>
    </recommendedName>
</protein>
<accession>P48997</accession>
<dbReference type="EMBL" id="L28819">
    <property type="protein sequence ID" value="AAA39330.1"/>
    <property type="molecule type" value="Genomic_DNA"/>
</dbReference>
<dbReference type="PIR" id="A49377">
    <property type="entry name" value="A49377"/>
</dbReference>
<dbReference type="FunCoup" id="P48997">
    <property type="interactions" value="6"/>
</dbReference>
<dbReference type="STRING" id="10090.ENSMUSP00000059780"/>
<dbReference type="iPTMnet" id="P48997"/>
<dbReference type="PhosphoSitePlus" id="P48997"/>
<dbReference type="PaxDb" id="10090-ENSMUSP00000059780"/>
<dbReference type="ProteomicsDB" id="266997"/>
<dbReference type="AGR" id="MGI:96626"/>
<dbReference type="MGI" id="MGI:96626">
    <property type="gene designation" value="Ivl"/>
</dbReference>
<dbReference type="eggNOG" id="ENOG502REJ9">
    <property type="taxonomic scope" value="Eukaryota"/>
</dbReference>
<dbReference type="InParanoid" id="P48997"/>
<dbReference type="OrthoDB" id="9635080at2759"/>
<dbReference type="PhylomeDB" id="P48997"/>
<dbReference type="PRO" id="PR:P48997"/>
<dbReference type="Proteomes" id="UP000000589">
    <property type="component" value="Unplaced"/>
</dbReference>
<dbReference type="RNAct" id="P48997">
    <property type="molecule type" value="protein"/>
</dbReference>
<dbReference type="GO" id="GO:0001533">
    <property type="term" value="C:cornified envelope"/>
    <property type="evidence" value="ECO:0000314"/>
    <property type="project" value="MGI"/>
</dbReference>
<dbReference type="GO" id="GO:0005737">
    <property type="term" value="C:cytoplasm"/>
    <property type="evidence" value="ECO:0007669"/>
    <property type="project" value="UniProtKB-SubCell"/>
</dbReference>
<dbReference type="GO" id="GO:0031424">
    <property type="term" value="P:keratinization"/>
    <property type="evidence" value="ECO:0007669"/>
    <property type="project" value="UniProtKB-KW"/>
</dbReference>
<dbReference type="GO" id="GO:0002786">
    <property type="term" value="P:regulation of antibacterial peptide production"/>
    <property type="evidence" value="ECO:0000316"/>
    <property type="project" value="MGI"/>
</dbReference>
<dbReference type="InterPro" id="IPR009733">
    <property type="entry name" value="Involucrin2"/>
</dbReference>
<dbReference type="InterPro" id="IPR019743">
    <property type="entry name" value="Involucrin_CS"/>
</dbReference>
<dbReference type="InterPro" id="IPR019571">
    <property type="entry name" value="Involucrin_N"/>
</dbReference>
<dbReference type="Pfam" id="PF06994">
    <property type="entry name" value="Involucrin2"/>
    <property type="match status" value="6"/>
</dbReference>
<dbReference type="Pfam" id="PF10583">
    <property type="entry name" value="Involucrin_N"/>
    <property type="match status" value="1"/>
</dbReference>
<dbReference type="PROSITE" id="PS00795">
    <property type="entry name" value="INVOLUCRIN"/>
    <property type="match status" value="1"/>
</dbReference>
<keyword id="KW-0963">Cytoplasm</keyword>
<keyword id="KW-0417">Keratinization</keyword>
<keyword id="KW-1185">Reference proteome</keyword>
<keyword id="KW-0677">Repeat</keyword>
<feature type="chain" id="PRO_0000159739" description="Involucrin">
    <location>
        <begin position="1"/>
        <end position="467"/>
    </location>
</feature>
<feature type="region of interest" description="Disordered" evidence="1">
    <location>
        <begin position="48"/>
        <end position="467"/>
    </location>
</feature>
<feature type="compositionally biased region" description="Basic and acidic residues" evidence="1">
    <location>
        <begin position="49"/>
        <end position="75"/>
    </location>
</feature>
<feature type="compositionally biased region" description="Low complexity" evidence="1">
    <location>
        <begin position="76"/>
        <end position="95"/>
    </location>
</feature>
<feature type="compositionally biased region" description="Low complexity" evidence="1">
    <location>
        <begin position="105"/>
        <end position="177"/>
    </location>
</feature>
<feature type="compositionally biased region" description="Basic and acidic residues" evidence="1">
    <location>
        <begin position="178"/>
        <end position="192"/>
    </location>
</feature>
<feature type="compositionally biased region" description="Basic and acidic residues" evidence="1">
    <location>
        <begin position="220"/>
        <end position="231"/>
    </location>
</feature>
<feature type="compositionally biased region" description="Low complexity" evidence="1">
    <location>
        <begin position="278"/>
        <end position="290"/>
    </location>
</feature>
<feature type="compositionally biased region" description="Basic and acidic residues" evidence="1">
    <location>
        <begin position="295"/>
        <end position="318"/>
    </location>
</feature>
<feature type="compositionally biased region" description="Basic and acidic residues" evidence="1">
    <location>
        <begin position="348"/>
        <end position="373"/>
    </location>
</feature>
<feature type="compositionally biased region" description="Basic and acidic residues" evidence="1">
    <location>
        <begin position="380"/>
        <end position="391"/>
    </location>
</feature>
<feature type="compositionally biased region" description="Basic and acidic residues" evidence="1">
    <location>
        <begin position="415"/>
        <end position="437"/>
    </location>
</feature>
<feature type="compositionally biased region" description="Basic and acidic residues" evidence="1">
    <location>
        <begin position="450"/>
        <end position="467"/>
    </location>
</feature>
<name>INVO_MOUSE</name>
<sequence>MSHQHTLPVTVPAVVQGPLKTVCSPDHIQQEQAKQPTPHPTQCQVFTEIQEKGFPKHEEKRPNPVKDLPDQKCEHQQQPGPQKQQLQVKKSQQELQEQELHLEKQQLPQEPQGLLCLEQQQQQEPQMQEQHLRQQQQQQQQQQQQQQQQQQQETQEQGLCLGQKQQQQQQDMLVPQELHLRQHQEKLQDPELHLGQQQKTPEEQKLIPGEKQQELHLGQRHQEPQEQELHLGQKQKQKLHEPELQLGKQQHQKPSEPELPLGKQQQESPEPELPLGKQQQQESPEPELQLGKQQQSHEPDMAGDQKEKQKLHKPELYLRKQQYQESPDPELSLGKQQHQECQEPELQLEEKQHQKPPEPELHLGKQQESHEPDMAEDLEEKQKLGEPELHLGKQQQQQIEREGYQGPKSLGQSLKQEKASREQQLDYSHLEQEKELSDQPLDQALVKKGKQLERKKHELENRTQQEK</sequence>
<evidence type="ECO:0000256" key="1">
    <source>
        <dbReference type="SAM" id="MobiDB-lite"/>
    </source>
</evidence>
<evidence type="ECO:0000305" key="2"/>